<organism>
    <name type="scientific">Arabidopsis thaliana</name>
    <name type="common">Mouse-ear cress</name>
    <dbReference type="NCBI Taxonomy" id="3702"/>
    <lineage>
        <taxon>Eukaryota</taxon>
        <taxon>Viridiplantae</taxon>
        <taxon>Streptophyta</taxon>
        <taxon>Embryophyta</taxon>
        <taxon>Tracheophyta</taxon>
        <taxon>Spermatophyta</taxon>
        <taxon>Magnoliopsida</taxon>
        <taxon>eudicotyledons</taxon>
        <taxon>Gunneridae</taxon>
        <taxon>Pentapetalae</taxon>
        <taxon>rosids</taxon>
        <taxon>malvids</taxon>
        <taxon>Brassicales</taxon>
        <taxon>Brassicaceae</taxon>
        <taxon>Camelineae</taxon>
        <taxon>Arabidopsis</taxon>
    </lineage>
</organism>
<proteinExistence type="evidence at transcript level"/>
<comment type="function">
    <text evidence="3">Probable transcription factor that may act in the sucrose-signaling pathway.</text>
</comment>
<comment type="subcellular location">
    <subcellularLocation>
        <location evidence="5">Nucleus</location>
    </subcellularLocation>
</comment>
<comment type="tissue specificity">
    <text evidence="4">Predominantly expressed in leaves and flowers.</text>
</comment>
<comment type="similarity">
    <text evidence="5">Belongs to the HD-ZIP homeobox family. Class I subfamily.</text>
</comment>
<comment type="sequence caution" evidence="5">
    <conflict type="erroneous initiation">
        <sequence resource="EMBL-CDS" id="AAM63933"/>
    </conflict>
</comment>
<keyword id="KW-0238">DNA-binding</keyword>
<keyword id="KW-0371">Homeobox</keyword>
<keyword id="KW-0539">Nucleus</keyword>
<keyword id="KW-1185">Reference proteome</keyword>
<keyword id="KW-0804">Transcription</keyword>
<keyword id="KW-0805">Transcription regulation</keyword>
<gene>
    <name type="primary">ATHB-13</name>
    <name type="ordered locus">At1g69780</name>
    <name type="ORF">T6C23.2</name>
</gene>
<dbReference type="EMBL" id="AF208044">
    <property type="protein sequence ID" value="AAF20996.1"/>
    <property type="molecule type" value="mRNA"/>
</dbReference>
<dbReference type="EMBL" id="AC013289">
    <property type="protein sequence ID" value="AAG52541.1"/>
    <property type="molecule type" value="Genomic_DNA"/>
</dbReference>
<dbReference type="EMBL" id="CP002684">
    <property type="protein sequence ID" value="AEE34974.1"/>
    <property type="molecule type" value="Genomic_DNA"/>
</dbReference>
<dbReference type="EMBL" id="AY057572">
    <property type="protein sequence ID" value="AAL09811.1"/>
    <property type="molecule type" value="mRNA"/>
</dbReference>
<dbReference type="EMBL" id="AY133645">
    <property type="protein sequence ID" value="AAM91475.1"/>
    <property type="molecule type" value="mRNA"/>
</dbReference>
<dbReference type="EMBL" id="AY086888">
    <property type="protein sequence ID" value="AAM63933.1"/>
    <property type="status" value="ALT_INIT"/>
    <property type="molecule type" value="mRNA"/>
</dbReference>
<dbReference type="PIR" id="H96719">
    <property type="entry name" value="H96719"/>
</dbReference>
<dbReference type="SMR" id="Q8LC03"/>
<dbReference type="BioGRID" id="28535">
    <property type="interactions" value="31"/>
</dbReference>
<dbReference type="FunCoup" id="Q8LC03">
    <property type="interactions" value="12"/>
</dbReference>
<dbReference type="IntAct" id="Q8LC03">
    <property type="interactions" value="29"/>
</dbReference>
<dbReference type="STRING" id="3702.Q8LC03"/>
<dbReference type="PaxDb" id="3702-AT1G69780.1"/>
<dbReference type="ProteomicsDB" id="246823"/>
<dbReference type="EnsemblPlants" id="AT1G69780.1">
    <property type="protein sequence ID" value="AT1G69780.1"/>
    <property type="gene ID" value="AT1G69780"/>
</dbReference>
<dbReference type="GeneID" id="843314"/>
<dbReference type="Gramene" id="AT1G69780.1">
    <property type="protein sequence ID" value="AT1G69780.1"/>
    <property type="gene ID" value="AT1G69780"/>
</dbReference>
<dbReference type="KEGG" id="ath:AT1G69780"/>
<dbReference type="Araport" id="AT1G69780"/>
<dbReference type="TAIR" id="AT1G69780">
    <property type="gene designation" value="ATHB13"/>
</dbReference>
<dbReference type="eggNOG" id="KOG0483">
    <property type="taxonomic scope" value="Eukaryota"/>
</dbReference>
<dbReference type="HOGENOM" id="CLU_060842_4_0_1"/>
<dbReference type="InParanoid" id="Q8LC03"/>
<dbReference type="OMA" id="GCCDLET"/>
<dbReference type="PhylomeDB" id="Q8LC03"/>
<dbReference type="PRO" id="PR:Q8LC03"/>
<dbReference type="Proteomes" id="UP000006548">
    <property type="component" value="Chromosome 1"/>
</dbReference>
<dbReference type="ExpressionAtlas" id="Q8LC03">
    <property type="expression patterns" value="baseline and differential"/>
</dbReference>
<dbReference type="GO" id="GO:0005634">
    <property type="term" value="C:nucleus"/>
    <property type="evidence" value="ECO:0007669"/>
    <property type="project" value="UniProtKB-SubCell"/>
</dbReference>
<dbReference type="GO" id="GO:0003700">
    <property type="term" value="F:DNA-binding transcription factor activity"/>
    <property type="evidence" value="ECO:0000250"/>
    <property type="project" value="TAIR"/>
</dbReference>
<dbReference type="GO" id="GO:0000981">
    <property type="term" value="F:DNA-binding transcription factor activity, RNA polymerase II-specific"/>
    <property type="evidence" value="ECO:0007669"/>
    <property type="project" value="InterPro"/>
</dbReference>
<dbReference type="GO" id="GO:0043565">
    <property type="term" value="F:sequence-specific DNA binding"/>
    <property type="evidence" value="ECO:0000314"/>
    <property type="project" value="TAIR"/>
</dbReference>
<dbReference type="GO" id="GO:0000976">
    <property type="term" value="F:transcription cis-regulatory region binding"/>
    <property type="evidence" value="ECO:0000353"/>
    <property type="project" value="TAIR"/>
</dbReference>
<dbReference type="GO" id="GO:0048826">
    <property type="term" value="P:cotyledon morphogenesis"/>
    <property type="evidence" value="ECO:0000315"/>
    <property type="project" value="TAIR"/>
</dbReference>
<dbReference type="GO" id="GO:0009965">
    <property type="term" value="P:leaf morphogenesis"/>
    <property type="evidence" value="ECO:0000315"/>
    <property type="project" value="TAIR"/>
</dbReference>
<dbReference type="GO" id="GO:0080022">
    <property type="term" value="P:primary root development"/>
    <property type="evidence" value="ECO:0000315"/>
    <property type="project" value="TAIR"/>
</dbReference>
<dbReference type="GO" id="GO:0009744">
    <property type="term" value="P:response to sucrose"/>
    <property type="evidence" value="ECO:0000315"/>
    <property type="project" value="TAIR"/>
</dbReference>
<dbReference type="CDD" id="cd00086">
    <property type="entry name" value="homeodomain"/>
    <property type="match status" value="1"/>
</dbReference>
<dbReference type="FunFam" id="1.10.10.60:FF:000200">
    <property type="entry name" value="Homeobox-leucine zipper protein ATHB-13"/>
    <property type="match status" value="1"/>
</dbReference>
<dbReference type="Gene3D" id="1.10.10.60">
    <property type="entry name" value="Homeodomain-like"/>
    <property type="match status" value="1"/>
</dbReference>
<dbReference type="InterPro" id="IPR001356">
    <property type="entry name" value="HD"/>
</dbReference>
<dbReference type="InterPro" id="IPR045224">
    <property type="entry name" value="HDZip_class_I_plant"/>
</dbReference>
<dbReference type="InterPro" id="IPR017970">
    <property type="entry name" value="Homeobox_CS"/>
</dbReference>
<dbReference type="InterPro" id="IPR009057">
    <property type="entry name" value="Homeodomain-like_sf"/>
</dbReference>
<dbReference type="InterPro" id="IPR000047">
    <property type="entry name" value="HTH_motif"/>
</dbReference>
<dbReference type="InterPro" id="IPR003106">
    <property type="entry name" value="Leu_zip_homeo"/>
</dbReference>
<dbReference type="PANTHER" id="PTHR24326">
    <property type="entry name" value="HOMEOBOX-LEUCINE ZIPPER PROTEIN"/>
    <property type="match status" value="1"/>
</dbReference>
<dbReference type="PANTHER" id="PTHR24326:SF176">
    <property type="entry name" value="HOMEOBOX-LEUCINE ZIPPER PROTEIN ATHB-13"/>
    <property type="match status" value="1"/>
</dbReference>
<dbReference type="Pfam" id="PF02183">
    <property type="entry name" value="HALZ"/>
    <property type="match status" value="1"/>
</dbReference>
<dbReference type="Pfam" id="PF00046">
    <property type="entry name" value="Homeodomain"/>
    <property type="match status" value="1"/>
</dbReference>
<dbReference type="PRINTS" id="PR00031">
    <property type="entry name" value="HTHREPRESSR"/>
</dbReference>
<dbReference type="SMART" id="SM00389">
    <property type="entry name" value="HOX"/>
    <property type="match status" value="1"/>
</dbReference>
<dbReference type="SUPFAM" id="SSF46689">
    <property type="entry name" value="Homeodomain-like"/>
    <property type="match status" value="1"/>
</dbReference>
<dbReference type="PROSITE" id="PS00027">
    <property type="entry name" value="HOMEOBOX_1"/>
    <property type="match status" value="1"/>
</dbReference>
<dbReference type="PROSITE" id="PS50071">
    <property type="entry name" value="HOMEOBOX_2"/>
    <property type="match status" value="1"/>
</dbReference>
<evidence type="ECO:0000255" key="1">
    <source>
        <dbReference type="PROSITE-ProRule" id="PRU00108"/>
    </source>
</evidence>
<evidence type="ECO:0000256" key="2">
    <source>
        <dbReference type="SAM" id="MobiDB-lite"/>
    </source>
</evidence>
<evidence type="ECO:0000269" key="3">
    <source>
    </source>
</evidence>
<evidence type="ECO:0000269" key="4">
    <source>
    </source>
</evidence>
<evidence type="ECO:0000305" key="5"/>
<feature type="chain" id="PRO_0000257794" description="Homeobox-leucine zipper protein ATHB-13">
    <location>
        <begin position="1"/>
        <end position="294"/>
    </location>
</feature>
<feature type="DNA-binding region" description="Homeobox" evidence="1">
    <location>
        <begin position="82"/>
        <end position="141"/>
    </location>
</feature>
<feature type="region of interest" description="Leucine-zipper">
    <location>
        <begin position="142"/>
        <end position="177"/>
    </location>
</feature>
<feature type="region of interest" description="Disordered" evidence="2">
    <location>
        <begin position="181"/>
        <end position="246"/>
    </location>
</feature>
<feature type="compositionally biased region" description="Low complexity" evidence="2">
    <location>
        <begin position="197"/>
        <end position="210"/>
    </location>
</feature>
<feature type="compositionally biased region" description="Polar residues" evidence="2">
    <location>
        <begin position="214"/>
        <end position="223"/>
    </location>
</feature>
<feature type="sequence conflict" description="In Ref. 5; AAM63933." evidence="5" ref="5">
    <original>D</original>
    <variation>H</variation>
    <location>
        <position position="154"/>
    </location>
</feature>
<protein>
    <recommendedName>
        <fullName>Homeobox-leucine zipper protein ATHB-13</fullName>
    </recommendedName>
    <alternativeName>
        <fullName>HD-ZIP protein ATHB-13</fullName>
    </alternativeName>
    <alternativeName>
        <fullName>Homeodomain transcription factor ATHB-13</fullName>
    </alternativeName>
</protein>
<sequence>MSCNNGMSFFPSNFMIQTSYEDDHPHQSPSLAPLLPSCSLPQDLHGFASFLGKRSPMEGCCDLETGNNMNGEEDYSDDGSQMGEKKRRLNMEQVKTLEKNFELGNKLEPERKMQLARALGLQPRQIAIWFQNRRARWKTKQLEKDYDTLKRQFDTLKAENDLLQTHNQKLQAEIMGLKNREQTESINLNKETEGSCSNRSDNSSDNLRLDISTAPPSNDSTLTGGHPPPPQTVGRHFFPPSPATATTTTTTMQFFQNSSSGQSMVKEENSISNMFCAMDDHSGFWPWLDQQQYN</sequence>
<accession>Q8LC03</accession>
<accession>Q9S7A4</accession>
<name>ATB13_ARATH</name>
<reference key="1">
    <citation type="journal article" date="2001" name="Plant Mol. Biol.">
        <title>Sugar-dependent alterations in cotyledon and leaf development in transgenic plants expressing the HDZhdip gene ATHB13.</title>
        <authorList>
            <person name="Hanson J."/>
            <person name="Johannesson H."/>
            <person name="Engstroem P."/>
        </authorList>
    </citation>
    <scope>NUCLEOTIDE SEQUENCE [MRNA]</scope>
    <scope>FUNCTION</scope>
</reference>
<reference key="2">
    <citation type="journal article" date="2000" name="Nature">
        <title>Sequence and analysis of chromosome 1 of the plant Arabidopsis thaliana.</title>
        <authorList>
            <person name="Theologis A."/>
            <person name="Ecker J.R."/>
            <person name="Palm C.J."/>
            <person name="Federspiel N.A."/>
            <person name="Kaul S."/>
            <person name="White O."/>
            <person name="Alonso J."/>
            <person name="Altafi H."/>
            <person name="Araujo R."/>
            <person name="Bowman C.L."/>
            <person name="Brooks S.Y."/>
            <person name="Buehler E."/>
            <person name="Chan A."/>
            <person name="Chao Q."/>
            <person name="Chen H."/>
            <person name="Cheuk R.F."/>
            <person name="Chin C.W."/>
            <person name="Chung M.K."/>
            <person name="Conn L."/>
            <person name="Conway A.B."/>
            <person name="Conway A.R."/>
            <person name="Creasy T.H."/>
            <person name="Dewar K."/>
            <person name="Dunn P."/>
            <person name="Etgu P."/>
            <person name="Feldblyum T.V."/>
            <person name="Feng J.-D."/>
            <person name="Fong B."/>
            <person name="Fujii C.Y."/>
            <person name="Gill J.E."/>
            <person name="Goldsmith A.D."/>
            <person name="Haas B."/>
            <person name="Hansen N.F."/>
            <person name="Hughes B."/>
            <person name="Huizar L."/>
            <person name="Hunter J.L."/>
            <person name="Jenkins J."/>
            <person name="Johnson-Hopson C."/>
            <person name="Khan S."/>
            <person name="Khaykin E."/>
            <person name="Kim C.J."/>
            <person name="Koo H.L."/>
            <person name="Kremenetskaia I."/>
            <person name="Kurtz D.B."/>
            <person name="Kwan A."/>
            <person name="Lam B."/>
            <person name="Langin-Hooper S."/>
            <person name="Lee A."/>
            <person name="Lee J.M."/>
            <person name="Lenz C.A."/>
            <person name="Li J.H."/>
            <person name="Li Y.-P."/>
            <person name="Lin X."/>
            <person name="Liu S.X."/>
            <person name="Liu Z.A."/>
            <person name="Luros J.S."/>
            <person name="Maiti R."/>
            <person name="Marziali A."/>
            <person name="Militscher J."/>
            <person name="Miranda M."/>
            <person name="Nguyen M."/>
            <person name="Nierman W.C."/>
            <person name="Osborne B.I."/>
            <person name="Pai G."/>
            <person name="Peterson J."/>
            <person name="Pham P.K."/>
            <person name="Rizzo M."/>
            <person name="Rooney T."/>
            <person name="Rowley D."/>
            <person name="Sakano H."/>
            <person name="Salzberg S.L."/>
            <person name="Schwartz J.R."/>
            <person name="Shinn P."/>
            <person name="Southwick A.M."/>
            <person name="Sun H."/>
            <person name="Tallon L.J."/>
            <person name="Tambunga G."/>
            <person name="Toriumi M.J."/>
            <person name="Town C.D."/>
            <person name="Utterback T."/>
            <person name="Van Aken S."/>
            <person name="Vaysberg M."/>
            <person name="Vysotskaia V.S."/>
            <person name="Walker M."/>
            <person name="Wu D."/>
            <person name="Yu G."/>
            <person name="Fraser C.M."/>
            <person name="Venter J.C."/>
            <person name="Davis R.W."/>
        </authorList>
    </citation>
    <scope>NUCLEOTIDE SEQUENCE [LARGE SCALE GENOMIC DNA]</scope>
    <source>
        <strain>cv. Columbia</strain>
    </source>
</reference>
<reference key="3">
    <citation type="journal article" date="2017" name="Plant J.">
        <title>Araport11: a complete reannotation of the Arabidopsis thaliana reference genome.</title>
        <authorList>
            <person name="Cheng C.Y."/>
            <person name="Krishnakumar V."/>
            <person name="Chan A.P."/>
            <person name="Thibaud-Nissen F."/>
            <person name="Schobel S."/>
            <person name="Town C.D."/>
        </authorList>
    </citation>
    <scope>GENOME REANNOTATION</scope>
    <source>
        <strain>cv. Columbia</strain>
    </source>
</reference>
<reference key="4">
    <citation type="journal article" date="2003" name="Science">
        <title>Empirical analysis of transcriptional activity in the Arabidopsis genome.</title>
        <authorList>
            <person name="Yamada K."/>
            <person name="Lim J."/>
            <person name="Dale J.M."/>
            <person name="Chen H."/>
            <person name="Shinn P."/>
            <person name="Palm C.J."/>
            <person name="Southwick A.M."/>
            <person name="Wu H.C."/>
            <person name="Kim C.J."/>
            <person name="Nguyen M."/>
            <person name="Pham P.K."/>
            <person name="Cheuk R.F."/>
            <person name="Karlin-Newmann G."/>
            <person name="Liu S.X."/>
            <person name="Lam B."/>
            <person name="Sakano H."/>
            <person name="Wu T."/>
            <person name="Yu G."/>
            <person name="Miranda M."/>
            <person name="Quach H.L."/>
            <person name="Tripp M."/>
            <person name="Chang C.H."/>
            <person name="Lee J.M."/>
            <person name="Toriumi M.J."/>
            <person name="Chan M.M."/>
            <person name="Tang C.C."/>
            <person name="Onodera C.S."/>
            <person name="Deng J.M."/>
            <person name="Akiyama K."/>
            <person name="Ansari Y."/>
            <person name="Arakawa T."/>
            <person name="Banh J."/>
            <person name="Banno F."/>
            <person name="Bowser L."/>
            <person name="Brooks S.Y."/>
            <person name="Carninci P."/>
            <person name="Chao Q."/>
            <person name="Choy N."/>
            <person name="Enju A."/>
            <person name="Goldsmith A.D."/>
            <person name="Gurjal M."/>
            <person name="Hansen N.F."/>
            <person name="Hayashizaki Y."/>
            <person name="Johnson-Hopson C."/>
            <person name="Hsuan V.W."/>
            <person name="Iida K."/>
            <person name="Karnes M."/>
            <person name="Khan S."/>
            <person name="Koesema E."/>
            <person name="Ishida J."/>
            <person name="Jiang P.X."/>
            <person name="Jones T."/>
            <person name="Kawai J."/>
            <person name="Kamiya A."/>
            <person name="Meyers C."/>
            <person name="Nakajima M."/>
            <person name="Narusaka M."/>
            <person name="Seki M."/>
            <person name="Sakurai T."/>
            <person name="Satou M."/>
            <person name="Tamse R."/>
            <person name="Vaysberg M."/>
            <person name="Wallender E.K."/>
            <person name="Wong C."/>
            <person name="Yamamura Y."/>
            <person name="Yuan S."/>
            <person name="Shinozaki K."/>
            <person name="Davis R.W."/>
            <person name="Theologis A."/>
            <person name="Ecker J.R."/>
        </authorList>
    </citation>
    <scope>NUCLEOTIDE SEQUENCE [LARGE SCALE MRNA]</scope>
    <source>
        <strain>cv. Columbia</strain>
    </source>
</reference>
<reference key="5">
    <citation type="submission" date="2002-03" db="EMBL/GenBank/DDBJ databases">
        <title>Full-length cDNA from Arabidopsis thaliana.</title>
        <authorList>
            <person name="Brover V.V."/>
            <person name="Troukhan M.E."/>
            <person name="Alexandrov N.A."/>
            <person name="Lu Y.-P."/>
            <person name="Flavell R.B."/>
            <person name="Feldmann K.A."/>
        </authorList>
    </citation>
    <scope>NUCLEOTIDE SEQUENCE [LARGE SCALE MRNA]</scope>
</reference>
<reference key="6">
    <citation type="journal article" date="2005" name="Plant Physiol.">
        <title>Homeodomain leucine zipper class I genes in Arabidopsis. Expression patterns and phylogenetic relationships.</title>
        <authorList>
            <person name="Henriksson E."/>
            <person name="Olsson A.S.B."/>
            <person name="Johannesson H."/>
            <person name="Johansson H."/>
            <person name="Hanson J."/>
            <person name="Engstroem P."/>
            <person name="Soederman E."/>
        </authorList>
    </citation>
    <scope>GENE FAMILY</scope>
    <scope>TISSUE SPECIFICITY</scope>
</reference>